<evidence type="ECO:0000255" key="1">
    <source>
        <dbReference type="HAMAP-Rule" id="MF_00388"/>
    </source>
</evidence>
<protein>
    <recommendedName>
        <fullName evidence="1">UDP-3-O-acyl-N-acetylglucosamine deacetylase</fullName>
        <shortName evidence="1">UDP-3-O-acyl-GlcNAc deacetylase</shortName>
        <ecNumber evidence="1">3.5.1.108</ecNumber>
    </recommendedName>
    <alternativeName>
        <fullName evidence="1">UDP-3-O-[R-3-hydroxymyristoyl]-N-acetylglucosamine deacetylase</fullName>
    </alternativeName>
</protein>
<reference key="1">
    <citation type="journal article" date="2009" name="BMC Genomics">
        <title>Metabolic analysis of the soil microbe Dechloromonas aromatica str. RCB: indications of a surprisingly complex life-style and cryptic anaerobic pathways for aromatic degradation.</title>
        <authorList>
            <person name="Salinero K.K."/>
            <person name="Keller K."/>
            <person name="Feil W.S."/>
            <person name="Feil H."/>
            <person name="Trong S."/>
            <person name="Di Bartolo G."/>
            <person name="Lapidus A."/>
        </authorList>
    </citation>
    <scope>NUCLEOTIDE SEQUENCE [LARGE SCALE GENOMIC DNA]</scope>
    <source>
        <strain>RCB</strain>
    </source>
</reference>
<name>LPXC_DECAR</name>
<proteinExistence type="inferred from homology"/>
<accession>Q47AB0</accession>
<comment type="function">
    <text evidence="1">Catalyzes the hydrolysis of UDP-3-O-myristoyl-N-acetylglucosamine to form UDP-3-O-myristoylglucosamine and acetate, the committed step in lipid A biosynthesis.</text>
</comment>
<comment type="catalytic activity">
    <reaction evidence="1">
        <text>a UDP-3-O-[(3R)-3-hydroxyacyl]-N-acetyl-alpha-D-glucosamine + H2O = a UDP-3-O-[(3R)-3-hydroxyacyl]-alpha-D-glucosamine + acetate</text>
        <dbReference type="Rhea" id="RHEA:67816"/>
        <dbReference type="ChEBI" id="CHEBI:15377"/>
        <dbReference type="ChEBI" id="CHEBI:30089"/>
        <dbReference type="ChEBI" id="CHEBI:137740"/>
        <dbReference type="ChEBI" id="CHEBI:173225"/>
        <dbReference type="EC" id="3.5.1.108"/>
    </reaction>
</comment>
<comment type="cofactor">
    <cofactor evidence="1">
        <name>Zn(2+)</name>
        <dbReference type="ChEBI" id="CHEBI:29105"/>
    </cofactor>
</comment>
<comment type="pathway">
    <text evidence="1">Glycolipid biosynthesis; lipid IV(A) biosynthesis; lipid IV(A) from (3R)-3-hydroxytetradecanoyl-[acyl-carrier-protein] and UDP-N-acetyl-alpha-D-glucosamine: step 2/6.</text>
</comment>
<comment type="similarity">
    <text evidence="1">Belongs to the LpxC family.</text>
</comment>
<organism>
    <name type="scientific">Dechloromonas aromatica (strain RCB)</name>
    <dbReference type="NCBI Taxonomy" id="159087"/>
    <lineage>
        <taxon>Bacteria</taxon>
        <taxon>Pseudomonadati</taxon>
        <taxon>Pseudomonadota</taxon>
        <taxon>Betaproteobacteria</taxon>
        <taxon>Rhodocyclales</taxon>
        <taxon>Azonexaceae</taxon>
        <taxon>Dechloromonas</taxon>
    </lineage>
</organism>
<gene>
    <name evidence="1" type="primary">lpxC</name>
    <name type="ordered locus">Daro_3492</name>
</gene>
<dbReference type="EC" id="3.5.1.108" evidence="1"/>
<dbReference type="EMBL" id="CP000089">
    <property type="protein sequence ID" value="AAZ48221.1"/>
    <property type="molecule type" value="Genomic_DNA"/>
</dbReference>
<dbReference type="SMR" id="Q47AB0"/>
<dbReference type="STRING" id="159087.Daro_3492"/>
<dbReference type="KEGG" id="dar:Daro_3492"/>
<dbReference type="eggNOG" id="COG0774">
    <property type="taxonomic scope" value="Bacteria"/>
</dbReference>
<dbReference type="HOGENOM" id="CLU_046528_1_0_4"/>
<dbReference type="OrthoDB" id="9802746at2"/>
<dbReference type="UniPathway" id="UPA00359">
    <property type="reaction ID" value="UER00478"/>
</dbReference>
<dbReference type="GO" id="GO:0016020">
    <property type="term" value="C:membrane"/>
    <property type="evidence" value="ECO:0007669"/>
    <property type="project" value="GOC"/>
</dbReference>
<dbReference type="GO" id="GO:0046872">
    <property type="term" value="F:metal ion binding"/>
    <property type="evidence" value="ECO:0007669"/>
    <property type="project" value="UniProtKB-KW"/>
</dbReference>
<dbReference type="GO" id="GO:0103117">
    <property type="term" value="F:UDP-3-O-acyl-N-acetylglucosamine deacetylase activity"/>
    <property type="evidence" value="ECO:0007669"/>
    <property type="project" value="UniProtKB-UniRule"/>
</dbReference>
<dbReference type="GO" id="GO:0009245">
    <property type="term" value="P:lipid A biosynthetic process"/>
    <property type="evidence" value="ECO:0007669"/>
    <property type="project" value="UniProtKB-UniRule"/>
</dbReference>
<dbReference type="Gene3D" id="3.30.230.20">
    <property type="entry name" value="lpxc deacetylase, domain 1"/>
    <property type="match status" value="1"/>
</dbReference>
<dbReference type="Gene3D" id="3.30.1700.10">
    <property type="entry name" value="lpxc deacetylase, domain 2"/>
    <property type="match status" value="1"/>
</dbReference>
<dbReference type="HAMAP" id="MF_00388">
    <property type="entry name" value="LpxC"/>
    <property type="match status" value="1"/>
</dbReference>
<dbReference type="InterPro" id="IPR020568">
    <property type="entry name" value="Ribosomal_Su5_D2-typ_SF"/>
</dbReference>
<dbReference type="InterPro" id="IPR004463">
    <property type="entry name" value="UDP-acyl_GlcNac_deAcase"/>
</dbReference>
<dbReference type="InterPro" id="IPR011334">
    <property type="entry name" value="UDP-acyl_GlcNac_deAcase_C"/>
</dbReference>
<dbReference type="InterPro" id="IPR015870">
    <property type="entry name" value="UDP-acyl_N-AcGlcN_deAcase_N"/>
</dbReference>
<dbReference type="NCBIfam" id="TIGR00325">
    <property type="entry name" value="lpxC"/>
    <property type="match status" value="1"/>
</dbReference>
<dbReference type="PANTHER" id="PTHR33694">
    <property type="entry name" value="UDP-3-O-ACYL-N-ACETYLGLUCOSAMINE DEACETYLASE 1, MITOCHONDRIAL-RELATED"/>
    <property type="match status" value="1"/>
</dbReference>
<dbReference type="PANTHER" id="PTHR33694:SF1">
    <property type="entry name" value="UDP-3-O-ACYL-N-ACETYLGLUCOSAMINE DEACETYLASE 1, MITOCHONDRIAL-RELATED"/>
    <property type="match status" value="1"/>
</dbReference>
<dbReference type="Pfam" id="PF03331">
    <property type="entry name" value="LpxC"/>
    <property type="match status" value="1"/>
</dbReference>
<dbReference type="SUPFAM" id="SSF54211">
    <property type="entry name" value="Ribosomal protein S5 domain 2-like"/>
    <property type="match status" value="2"/>
</dbReference>
<sequence length="305" mass="33515">MLKQRTLKTVIRASGVGLHGGVKVNMTLRPAAPDTGIVFRRVDLPEPVDIPAKAFMVGDTRMCSCLEKDGVKVGTIEHLMSALAGLGIDNVWVDLDAPEVPILDGSAAPFVFLIQSAGIEEQNAAKKFIRVTKTIEVRDGDKWARFEPYDGYRLAFSIVFNHPAIDKSAQKAEIDFAEQSYVREVARARTFGFMQEVEYLRENGLALGGGLENAIVLDEFRVLNQDGLRYGDEFVKHKILDAIGDLYLLGHPLLAAYSSHKGGHALNNQLARALLEQQSSWEIATFEQAEHAPSGVTRWLAQAAA</sequence>
<feature type="chain" id="PRO_0000253662" description="UDP-3-O-acyl-N-acetylglucosamine deacetylase">
    <location>
        <begin position="1"/>
        <end position="305"/>
    </location>
</feature>
<feature type="active site" description="Proton donor" evidence="1">
    <location>
        <position position="264"/>
    </location>
</feature>
<feature type="binding site" evidence="1">
    <location>
        <position position="78"/>
    </location>
    <ligand>
        <name>Zn(2+)</name>
        <dbReference type="ChEBI" id="CHEBI:29105"/>
    </ligand>
</feature>
<feature type="binding site" evidence="1">
    <location>
        <position position="237"/>
    </location>
    <ligand>
        <name>Zn(2+)</name>
        <dbReference type="ChEBI" id="CHEBI:29105"/>
    </ligand>
</feature>
<feature type="binding site" evidence="1">
    <location>
        <position position="241"/>
    </location>
    <ligand>
        <name>Zn(2+)</name>
        <dbReference type="ChEBI" id="CHEBI:29105"/>
    </ligand>
</feature>
<keyword id="KW-0378">Hydrolase</keyword>
<keyword id="KW-0441">Lipid A biosynthesis</keyword>
<keyword id="KW-0444">Lipid biosynthesis</keyword>
<keyword id="KW-0443">Lipid metabolism</keyword>
<keyword id="KW-0479">Metal-binding</keyword>
<keyword id="KW-0862">Zinc</keyword>